<gene>
    <name evidence="1" type="primary">smpB</name>
    <name type="ordered locus">Patl_1739</name>
</gene>
<dbReference type="EMBL" id="CP000388">
    <property type="protein sequence ID" value="ABG40260.1"/>
    <property type="molecule type" value="Genomic_DNA"/>
</dbReference>
<dbReference type="RefSeq" id="WP_006992410.1">
    <property type="nucleotide sequence ID" value="NC_008228.1"/>
</dbReference>
<dbReference type="SMR" id="Q15V28"/>
<dbReference type="STRING" id="342610.Patl_1739"/>
<dbReference type="KEGG" id="pat:Patl_1739"/>
<dbReference type="eggNOG" id="COG0691">
    <property type="taxonomic scope" value="Bacteria"/>
</dbReference>
<dbReference type="HOGENOM" id="CLU_108953_3_0_6"/>
<dbReference type="OrthoDB" id="9805462at2"/>
<dbReference type="Proteomes" id="UP000001981">
    <property type="component" value="Chromosome"/>
</dbReference>
<dbReference type="GO" id="GO:0005829">
    <property type="term" value="C:cytosol"/>
    <property type="evidence" value="ECO:0007669"/>
    <property type="project" value="TreeGrafter"/>
</dbReference>
<dbReference type="GO" id="GO:0003723">
    <property type="term" value="F:RNA binding"/>
    <property type="evidence" value="ECO:0007669"/>
    <property type="project" value="UniProtKB-UniRule"/>
</dbReference>
<dbReference type="GO" id="GO:0070929">
    <property type="term" value="P:trans-translation"/>
    <property type="evidence" value="ECO:0007669"/>
    <property type="project" value="UniProtKB-UniRule"/>
</dbReference>
<dbReference type="CDD" id="cd09294">
    <property type="entry name" value="SmpB"/>
    <property type="match status" value="1"/>
</dbReference>
<dbReference type="Gene3D" id="2.40.280.10">
    <property type="match status" value="1"/>
</dbReference>
<dbReference type="HAMAP" id="MF_00023">
    <property type="entry name" value="SmpB"/>
    <property type="match status" value="1"/>
</dbReference>
<dbReference type="InterPro" id="IPR023620">
    <property type="entry name" value="SmpB"/>
</dbReference>
<dbReference type="InterPro" id="IPR000037">
    <property type="entry name" value="SsrA-bd_prot"/>
</dbReference>
<dbReference type="InterPro" id="IPR020081">
    <property type="entry name" value="SsrA-bd_prot_CS"/>
</dbReference>
<dbReference type="NCBIfam" id="NF003843">
    <property type="entry name" value="PRK05422.1"/>
    <property type="match status" value="1"/>
</dbReference>
<dbReference type="NCBIfam" id="TIGR00086">
    <property type="entry name" value="smpB"/>
    <property type="match status" value="1"/>
</dbReference>
<dbReference type="PANTHER" id="PTHR30308:SF2">
    <property type="entry name" value="SSRA-BINDING PROTEIN"/>
    <property type="match status" value="1"/>
</dbReference>
<dbReference type="PANTHER" id="PTHR30308">
    <property type="entry name" value="TMRNA-BINDING COMPONENT OF TRANS-TRANSLATION TAGGING COMPLEX"/>
    <property type="match status" value="1"/>
</dbReference>
<dbReference type="Pfam" id="PF01668">
    <property type="entry name" value="SmpB"/>
    <property type="match status" value="1"/>
</dbReference>
<dbReference type="SUPFAM" id="SSF74982">
    <property type="entry name" value="Small protein B (SmpB)"/>
    <property type="match status" value="1"/>
</dbReference>
<dbReference type="PROSITE" id="PS01317">
    <property type="entry name" value="SSRP"/>
    <property type="match status" value="1"/>
</dbReference>
<reference key="1">
    <citation type="submission" date="2006-06" db="EMBL/GenBank/DDBJ databases">
        <title>Complete sequence of Pseudoalteromonas atlantica T6c.</title>
        <authorList>
            <consortium name="US DOE Joint Genome Institute"/>
            <person name="Copeland A."/>
            <person name="Lucas S."/>
            <person name="Lapidus A."/>
            <person name="Barry K."/>
            <person name="Detter J.C."/>
            <person name="Glavina del Rio T."/>
            <person name="Hammon N."/>
            <person name="Israni S."/>
            <person name="Dalin E."/>
            <person name="Tice H."/>
            <person name="Pitluck S."/>
            <person name="Saunders E."/>
            <person name="Brettin T."/>
            <person name="Bruce D."/>
            <person name="Han C."/>
            <person name="Tapia R."/>
            <person name="Gilna P."/>
            <person name="Schmutz J."/>
            <person name="Larimer F."/>
            <person name="Land M."/>
            <person name="Hauser L."/>
            <person name="Kyrpides N."/>
            <person name="Kim E."/>
            <person name="Karls A.C."/>
            <person name="Bartlett D."/>
            <person name="Higgins B.P."/>
            <person name="Richardson P."/>
        </authorList>
    </citation>
    <scope>NUCLEOTIDE SEQUENCE [LARGE SCALE GENOMIC DNA]</scope>
    <source>
        <strain>T6c / ATCC BAA-1087</strain>
    </source>
</reference>
<keyword id="KW-0963">Cytoplasm</keyword>
<keyword id="KW-0694">RNA-binding</keyword>
<feature type="chain" id="PRO_1000002108" description="SsrA-binding protein">
    <location>
        <begin position="1"/>
        <end position="158"/>
    </location>
</feature>
<accession>Q15V28</accession>
<organism>
    <name type="scientific">Pseudoalteromonas atlantica (strain T6c / ATCC BAA-1087)</name>
    <dbReference type="NCBI Taxonomy" id="3042615"/>
    <lineage>
        <taxon>Bacteria</taxon>
        <taxon>Pseudomonadati</taxon>
        <taxon>Pseudomonadota</taxon>
        <taxon>Gammaproteobacteria</taxon>
        <taxon>Alteromonadales</taxon>
        <taxon>Alteromonadaceae</taxon>
        <taxon>Paraglaciecola</taxon>
    </lineage>
</organism>
<name>SSRP_PSEA6</name>
<comment type="function">
    <text evidence="1">Required for rescue of stalled ribosomes mediated by trans-translation. Binds to transfer-messenger RNA (tmRNA), required for stable association of tmRNA with ribosomes. tmRNA and SmpB together mimic tRNA shape, replacing the anticodon stem-loop with SmpB. tmRNA is encoded by the ssrA gene; the 2 termini fold to resemble tRNA(Ala) and it encodes a 'tag peptide', a short internal open reading frame. During trans-translation Ala-aminoacylated tmRNA acts like a tRNA, entering the A-site of stalled ribosomes, displacing the stalled mRNA. The ribosome then switches to translate the ORF on the tmRNA; the nascent peptide is terminated with the 'tag peptide' encoded by the tmRNA and targeted for degradation. The ribosome is freed to recommence translation, which seems to be the essential function of trans-translation.</text>
</comment>
<comment type="subcellular location">
    <subcellularLocation>
        <location evidence="1">Cytoplasm</location>
    </subcellularLocation>
    <text evidence="1">The tmRNA-SmpB complex associates with stalled 70S ribosomes.</text>
</comment>
<comment type="similarity">
    <text evidence="1">Belongs to the SmpB family.</text>
</comment>
<sequence length="158" mass="18285">MKSKKSKSTNNTIALNKKARHDYILQDKIEAGIELQGWEVKSIRSGKVNLSDSYVTLHKGEAFLVGSTIQPLNQASSHVVCEPLRQRKLLLNKRELDKLIGSVERQGYSILATAMYWKKNWVKVEIYLGKGKHEHDKRDAVKDRDWARDKERMMKHKV</sequence>
<evidence type="ECO:0000255" key="1">
    <source>
        <dbReference type="HAMAP-Rule" id="MF_00023"/>
    </source>
</evidence>
<protein>
    <recommendedName>
        <fullName evidence="1">SsrA-binding protein</fullName>
    </recommendedName>
    <alternativeName>
        <fullName evidence="1">Small protein B</fullName>
    </alternativeName>
</protein>
<proteinExistence type="inferred from homology"/>